<feature type="chain" id="PRO_0000172718" description="Phosphatidylglycerol--prolipoprotein diacylglyceryl transferase">
    <location>
        <begin position="1"/>
        <end position="296"/>
    </location>
</feature>
<feature type="transmembrane region" description="Helical" evidence="1">
    <location>
        <begin position="10"/>
        <end position="30"/>
    </location>
</feature>
<feature type="transmembrane region" description="Helical" evidence="1">
    <location>
        <begin position="57"/>
        <end position="77"/>
    </location>
</feature>
<feature type="transmembrane region" description="Helical" evidence="1">
    <location>
        <begin position="92"/>
        <end position="112"/>
    </location>
</feature>
<feature type="transmembrane region" description="Helical" evidence="1">
    <location>
        <begin position="119"/>
        <end position="139"/>
    </location>
</feature>
<feature type="transmembrane region" description="Helical" evidence="1">
    <location>
        <begin position="194"/>
        <end position="214"/>
    </location>
</feature>
<feature type="transmembrane region" description="Helical" evidence="1">
    <location>
        <begin position="220"/>
        <end position="240"/>
    </location>
</feature>
<feature type="transmembrane region" description="Helical" evidence="1">
    <location>
        <begin position="255"/>
        <end position="275"/>
    </location>
</feature>
<feature type="binding site" evidence="1">
    <location>
        <position position="140"/>
    </location>
    <ligand>
        <name>a 1,2-diacyl-sn-glycero-3-phospho-(1'-sn-glycerol)</name>
        <dbReference type="ChEBI" id="CHEBI:64716"/>
    </ligand>
</feature>
<reference key="1">
    <citation type="journal article" date="2002" name="Nature">
        <title>Comparison of the genomes of two Xanthomonas pathogens with differing host specificities.</title>
        <authorList>
            <person name="da Silva A.C.R."/>
            <person name="Ferro J.A."/>
            <person name="Reinach F.C."/>
            <person name="Farah C.S."/>
            <person name="Furlan L.R."/>
            <person name="Quaggio R.B."/>
            <person name="Monteiro-Vitorello C.B."/>
            <person name="Van Sluys M.A."/>
            <person name="Almeida N.F. Jr."/>
            <person name="Alves L.M.C."/>
            <person name="do Amaral A.M."/>
            <person name="Bertolini M.C."/>
            <person name="Camargo L.E.A."/>
            <person name="Camarotte G."/>
            <person name="Cannavan F."/>
            <person name="Cardozo J."/>
            <person name="Chambergo F."/>
            <person name="Ciapina L.P."/>
            <person name="Cicarelli R.M.B."/>
            <person name="Coutinho L.L."/>
            <person name="Cursino-Santos J.R."/>
            <person name="El-Dorry H."/>
            <person name="Faria J.B."/>
            <person name="Ferreira A.J.S."/>
            <person name="Ferreira R.C.C."/>
            <person name="Ferro M.I.T."/>
            <person name="Formighieri E.F."/>
            <person name="Franco M.C."/>
            <person name="Greggio C.C."/>
            <person name="Gruber A."/>
            <person name="Katsuyama A.M."/>
            <person name="Kishi L.T."/>
            <person name="Leite R.P."/>
            <person name="Lemos E.G.M."/>
            <person name="Lemos M.V.F."/>
            <person name="Locali E.C."/>
            <person name="Machado M.A."/>
            <person name="Madeira A.M.B.N."/>
            <person name="Martinez-Rossi N.M."/>
            <person name="Martins E.C."/>
            <person name="Meidanis J."/>
            <person name="Menck C.F.M."/>
            <person name="Miyaki C.Y."/>
            <person name="Moon D.H."/>
            <person name="Moreira L.M."/>
            <person name="Novo M.T.M."/>
            <person name="Okura V.K."/>
            <person name="Oliveira M.C."/>
            <person name="Oliveira V.R."/>
            <person name="Pereira H.A."/>
            <person name="Rossi A."/>
            <person name="Sena J.A.D."/>
            <person name="Silva C."/>
            <person name="de Souza R.F."/>
            <person name="Spinola L.A.F."/>
            <person name="Takita M.A."/>
            <person name="Tamura R.E."/>
            <person name="Teixeira E.C."/>
            <person name="Tezza R.I.D."/>
            <person name="Trindade dos Santos M."/>
            <person name="Truffi D."/>
            <person name="Tsai S.M."/>
            <person name="White F.F."/>
            <person name="Setubal J.C."/>
            <person name="Kitajima J.P."/>
        </authorList>
    </citation>
    <scope>NUCLEOTIDE SEQUENCE [LARGE SCALE GENOMIC DNA]</scope>
    <source>
        <strain>ATCC 33913 / DSM 3586 / NCPPB 528 / LMG 568 / P 25</strain>
    </source>
</reference>
<gene>
    <name evidence="1" type="primary">lgt</name>
    <name type="ordered locus">XCC0786</name>
</gene>
<name>LGT_XANCP</name>
<organism>
    <name type="scientific">Xanthomonas campestris pv. campestris (strain ATCC 33913 / DSM 3586 / NCPPB 528 / LMG 568 / P 25)</name>
    <dbReference type="NCBI Taxonomy" id="190485"/>
    <lineage>
        <taxon>Bacteria</taxon>
        <taxon>Pseudomonadati</taxon>
        <taxon>Pseudomonadota</taxon>
        <taxon>Gammaproteobacteria</taxon>
        <taxon>Lysobacterales</taxon>
        <taxon>Lysobacteraceae</taxon>
        <taxon>Xanthomonas</taxon>
    </lineage>
</organism>
<comment type="function">
    <text evidence="1">Catalyzes the transfer of the diacylglyceryl group from phosphatidylglycerol to the sulfhydryl group of the N-terminal cysteine of a prolipoprotein, the first step in the formation of mature lipoproteins.</text>
</comment>
<comment type="catalytic activity">
    <reaction evidence="1">
        <text>L-cysteinyl-[prolipoprotein] + a 1,2-diacyl-sn-glycero-3-phospho-(1'-sn-glycerol) = an S-1,2-diacyl-sn-glyceryl-L-cysteinyl-[prolipoprotein] + sn-glycerol 1-phosphate + H(+)</text>
        <dbReference type="Rhea" id="RHEA:56712"/>
        <dbReference type="Rhea" id="RHEA-COMP:14679"/>
        <dbReference type="Rhea" id="RHEA-COMP:14680"/>
        <dbReference type="ChEBI" id="CHEBI:15378"/>
        <dbReference type="ChEBI" id="CHEBI:29950"/>
        <dbReference type="ChEBI" id="CHEBI:57685"/>
        <dbReference type="ChEBI" id="CHEBI:64716"/>
        <dbReference type="ChEBI" id="CHEBI:140658"/>
        <dbReference type="EC" id="2.5.1.145"/>
    </reaction>
</comment>
<comment type="pathway">
    <text evidence="1">Protein modification; lipoprotein biosynthesis (diacylglyceryl transfer).</text>
</comment>
<comment type="subcellular location">
    <subcellularLocation>
        <location evidence="1">Cell inner membrane</location>
        <topology evidence="1">Multi-pass membrane protein</topology>
    </subcellularLocation>
</comment>
<comment type="similarity">
    <text evidence="1">Belongs to the Lgt family.</text>
</comment>
<dbReference type="EC" id="2.5.1.145" evidence="1"/>
<dbReference type="EMBL" id="AE008922">
    <property type="protein sequence ID" value="AAM40101.1"/>
    <property type="molecule type" value="Genomic_DNA"/>
</dbReference>
<dbReference type="RefSeq" id="NP_636177.1">
    <property type="nucleotide sequence ID" value="NC_003902.1"/>
</dbReference>
<dbReference type="RefSeq" id="WP_011036022.1">
    <property type="nucleotide sequence ID" value="NC_003902.1"/>
</dbReference>
<dbReference type="SMR" id="Q8PCE8"/>
<dbReference type="STRING" id="190485.XCC0786"/>
<dbReference type="EnsemblBacteria" id="AAM40101">
    <property type="protein sequence ID" value="AAM40101"/>
    <property type="gene ID" value="XCC0786"/>
</dbReference>
<dbReference type="KEGG" id="xcc:XCC0786"/>
<dbReference type="PATRIC" id="fig|190485.4.peg.856"/>
<dbReference type="eggNOG" id="COG0682">
    <property type="taxonomic scope" value="Bacteria"/>
</dbReference>
<dbReference type="HOGENOM" id="CLU_013386_1_0_6"/>
<dbReference type="OrthoDB" id="871140at2"/>
<dbReference type="UniPathway" id="UPA00664"/>
<dbReference type="Proteomes" id="UP000001010">
    <property type="component" value="Chromosome"/>
</dbReference>
<dbReference type="GO" id="GO:0005886">
    <property type="term" value="C:plasma membrane"/>
    <property type="evidence" value="ECO:0000318"/>
    <property type="project" value="GO_Central"/>
</dbReference>
<dbReference type="GO" id="GO:0008961">
    <property type="term" value="F:phosphatidylglycerol-prolipoprotein diacylglyceryl transferase activity"/>
    <property type="evidence" value="ECO:0000318"/>
    <property type="project" value="GO_Central"/>
</dbReference>
<dbReference type="GO" id="GO:0042158">
    <property type="term" value="P:lipoprotein biosynthetic process"/>
    <property type="evidence" value="ECO:0000318"/>
    <property type="project" value="GO_Central"/>
</dbReference>
<dbReference type="HAMAP" id="MF_01147">
    <property type="entry name" value="Lgt"/>
    <property type="match status" value="1"/>
</dbReference>
<dbReference type="InterPro" id="IPR001640">
    <property type="entry name" value="Lgt"/>
</dbReference>
<dbReference type="NCBIfam" id="TIGR00544">
    <property type="entry name" value="lgt"/>
    <property type="match status" value="1"/>
</dbReference>
<dbReference type="PANTHER" id="PTHR30589:SF0">
    <property type="entry name" value="PHOSPHATIDYLGLYCEROL--PROLIPOPROTEIN DIACYLGLYCERYL TRANSFERASE"/>
    <property type="match status" value="1"/>
</dbReference>
<dbReference type="PANTHER" id="PTHR30589">
    <property type="entry name" value="PROLIPOPROTEIN DIACYLGLYCERYL TRANSFERASE"/>
    <property type="match status" value="1"/>
</dbReference>
<dbReference type="Pfam" id="PF01790">
    <property type="entry name" value="LGT"/>
    <property type="match status" value="1"/>
</dbReference>
<dbReference type="PROSITE" id="PS01311">
    <property type="entry name" value="LGT"/>
    <property type="match status" value="1"/>
</dbReference>
<evidence type="ECO:0000255" key="1">
    <source>
        <dbReference type="HAMAP-Rule" id="MF_01147"/>
    </source>
</evidence>
<accession>Q8PCE8</accession>
<proteinExistence type="inferred from homology"/>
<protein>
    <recommendedName>
        <fullName evidence="1">Phosphatidylglycerol--prolipoprotein diacylglyceryl transferase</fullName>
        <ecNumber evidence="1">2.5.1.145</ecNumber>
    </recommendedName>
</protein>
<sequence length="296" mass="32614">MIYLHAIDPIAFSLGPVQVHWYGLMYLAAFFSAWALGRSRILRGRLPGVDMDGFSDLLFYGMLGVVLGGRIGYMLFYAFDTFLANPLILFKVWEGGMSFHGGLLGVLIACGLWTRRHRLHFFDVMDFVAPLVPLGLGFGRLGNFVGGELWGKFTQAGWGVIFPHAPELADWPPAQLQAQYAAGALDRFARHPSQLYEAALEGVVMFVVLWTFSMKPRARYAVSGLFALLYGVFRFIVEFVRVPDAPLGYLAFNWLTMGQILSLPLIGVGLVLLALSRRAPVLQPVVPAAAGVEAAK</sequence>
<keyword id="KW-0997">Cell inner membrane</keyword>
<keyword id="KW-1003">Cell membrane</keyword>
<keyword id="KW-0472">Membrane</keyword>
<keyword id="KW-1185">Reference proteome</keyword>
<keyword id="KW-0808">Transferase</keyword>
<keyword id="KW-0812">Transmembrane</keyword>
<keyword id="KW-1133">Transmembrane helix</keyword>